<proteinExistence type="evidence at protein level"/>
<evidence type="ECO:0000250" key="1">
    <source>
        <dbReference type="UniProtKB" id="O48814"/>
    </source>
</evidence>
<evidence type="ECO:0000255" key="2"/>
<evidence type="ECO:0000255" key="3">
    <source>
        <dbReference type="PROSITE-ProRule" id="PRU00159"/>
    </source>
</evidence>
<evidence type="ECO:0000255" key="4">
    <source>
        <dbReference type="PROSITE-ProRule" id="PRU10027"/>
    </source>
</evidence>
<evidence type="ECO:0000256" key="5">
    <source>
        <dbReference type="SAM" id="MobiDB-lite"/>
    </source>
</evidence>
<evidence type="ECO:0000305" key="6"/>
<gene>
    <name type="ordered locus">At2g28960</name>
    <name type="ORF">T9I4.4</name>
</gene>
<protein>
    <recommendedName>
        <fullName>Probable LRR receptor-like serine/threonine-protein kinase At2g28960</fullName>
        <ecNumber>2.7.11.1</ecNumber>
    </recommendedName>
</protein>
<accession>C0LGL4</accession>
<accession>O81066</accession>
<comment type="catalytic activity">
    <reaction>
        <text>L-seryl-[protein] + ATP = O-phospho-L-seryl-[protein] + ADP + H(+)</text>
        <dbReference type="Rhea" id="RHEA:17989"/>
        <dbReference type="Rhea" id="RHEA-COMP:9863"/>
        <dbReference type="Rhea" id="RHEA-COMP:11604"/>
        <dbReference type="ChEBI" id="CHEBI:15378"/>
        <dbReference type="ChEBI" id="CHEBI:29999"/>
        <dbReference type="ChEBI" id="CHEBI:30616"/>
        <dbReference type="ChEBI" id="CHEBI:83421"/>
        <dbReference type="ChEBI" id="CHEBI:456216"/>
        <dbReference type="EC" id="2.7.11.1"/>
    </reaction>
</comment>
<comment type="catalytic activity">
    <reaction>
        <text>L-threonyl-[protein] + ATP = O-phospho-L-threonyl-[protein] + ADP + H(+)</text>
        <dbReference type="Rhea" id="RHEA:46608"/>
        <dbReference type="Rhea" id="RHEA-COMP:11060"/>
        <dbReference type="Rhea" id="RHEA-COMP:11605"/>
        <dbReference type="ChEBI" id="CHEBI:15378"/>
        <dbReference type="ChEBI" id="CHEBI:30013"/>
        <dbReference type="ChEBI" id="CHEBI:30616"/>
        <dbReference type="ChEBI" id="CHEBI:61977"/>
        <dbReference type="ChEBI" id="CHEBI:456216"/>
        <dbReference type="EC" id="2.7.11.1"/>
    </reaction>
</comment>
<comment type="interaction">
    <interactant intactId="EBI-16946048">
        <id>C0LGL4</id>
    </interactant>
    <interactant intactId="EBI-17126713">
        <id>C0LGE4</id>
        <label>At1g12460</label>
    </interactant>
    <organismsDiffer>false</organismsDiffer>
    <experiments>3</experiments>
</comment>
<comment type="interaction">
    <interactant intactId="EBI-16946048">
        <id>C0LGL4</id>
    </interactant>
    <interactant intactId="EBI-16956175">
        <id>Q9LRT1</id>
        <label>At3g28040</label>
    </interactant>
    <organismsDiffer>false</organismsDiffer>
    <experiments>2</experiments>
</comment>
<comment type="interaction">
    <interactant intactId="EBI-16946048">
        <id>C0LGL4</id>
    </interactant>
    <interactant intactId="EBI-20654480">
        <id>C0LGR6</id>
        <label>At4g29180</label>
    </interactant>
    <organismsDiffer>false</organismsDiffer>
    <experiments>2</experiments>
</comment>
<comment type="interaction">
    <interactant intactId="EBI-16946048">
        <id>C0LGL4</id>
    </interactant>
    <interactant intactId="EBI-16955302">
        <id>C0LGS2</id>
        <label>At4g36180</label>
    </interactant>
    <organismsDiffer>false</organismsDiffer>
    <experiments>2</experiments>
</comment>
<comment type="interaction">
    <interactant intactId="EBI-16946048">
        <id>C0LGL4</id>
    </interactant>
    <interactant intactId="EBI-16955335">
        <id>C0LGS3</id>
        <label>At4g37250</label>
    </interactant>
    <organismsDiffer>false</organismsDiffer>
    <experiments>2</experiments>
</comment>
<comment type="interaction">
    <interactant intactId="EBI-16946048">
        <id>C0LGL4</id>
    </interactant>
    <interactant intactId="EBI-16945916">
        <id>Q0WR59</id>
        <label>At5g10020</label>
    </interactant>
    <organismsDiffer>false</organismsDiffer>
    <experiments>2</experiments>
</comment>
<comment type="interaction">
    <interactant intactId="EBI-16946048">
        <id>C0LGL4</id>
    </interactant>
    <interactant intactId="EBI-16939160">
        <id>C0LGQ9</id>
        <label>GHR1</label>
    </interactant>
    <organismsDiffer>false</organismsDiffer>
    <experiments>2</experiments>
</comment>
<comment type="interaction">
    <interactant intactId="EBI-16946048">
        <id>C0LGL4</id>
    </interactant>
    <interactant intactId="EBI-17071528">
        <id>Q9FRI1</id>
        <label>LRR-RLK</label>
    </interactant>
    <organismsDiffer>false</organismsDiffer>
    <experiments>3</experiments>
</comment>
<comment type="interaction">
    <interactant intactId="EBI-16946048">
        <id>C0LGL4</id>
    </interactant>
    <interactant intactId="EBI-17121474">
        <id>Q93ZS4</id>
        <label>NIK3</label>
    </interactant>
    <organismsDiffer>false</organismsDiffer>
    <experiments>2</experiments>
</comment>
<comment type="interaction">
    <interactant intactId="EBI-16946048">
        <id>C0LGL4</id>
    </interactant>
    <interactant intactId="EBI-1238200">
        <id>Q9LZV7</id>
        <label>PXC2</label>
    </interactant>
    <organismsDiffer>false</organismsDiffer>
    <experiments>2</experiments>
</comment>
<comment type="interaction">
    <interactant intactId="EBI-16946048">
        <id>C0LGL4</id>
    </interactant>
    <interactant intactId="EBI-2023970">
        <id>P43298</id>
        <label>TMK1</label>
    </interactant>
    <organismsDiffer>false</organismsDiffer>
    <experiments>2</experiments>
</comment>
<comment type="subcellular location">
    <subcellularLocation>
        <location evidence="6">Membrane</location>
        <topology evidence="6">Single-pass type I membrane protein</topology>
    </subcellularLocation>
</comment>
<comment type="similarity">
    <text evidence="3">Belongs to the protein kinase superfamily. Ser/Thr protein kinase family.</text>
</comment>
<comment type="sequence caution" evidence="6">
    <conflict type="erroneous gene model prediction">
        <sequence resource="EMBL-CDS" id="AAC33224"/>
    </conflict>
</comment>
<reference key="1">
    <citation type="journal article" date="1999" name="Nature">
        <title>Sequence and analysis of chromosome 2 of the plant Arabidopsis thaliana.</title>
        <authorList>
            <person name="Lin X."/>
            <person name="Kaul S."/>
            <person name="Rounsley S.D."/>
            <person name="Shea T.P."/>
            <person name="Benito M.-I."/>
            <person name="Town C.D."/>
            <person name="Fujii C.Y."/>
            <person name="Mason T.M."/>
            <person name="Bowman C.L."/>
            <person name="Barnstead M.E."/>
            <person name="Feldblyum T.V."/>
            <person name="Buell C.R."/>
            <person name="Ketchum K.A."/>
            <person name="Lee J.J."/>
            <person name="Ronning C.M."/>
            <person name="Koo H.L."/>
            <person name="Moffat K.S."/>
            <person name="Cronin L.A."/>
            <person name="Shen M."/>
            <person name="Pai G."/>
            <person name="Van Aken S."/>
            <person name="Umayam L."/>
            <person name="Tallon L.J."/>
            <person name="Gill J.E."/>
            <person name="Adams M.D."/>
            <person name="Carrera A.J."/>
            <person name="Creasy T.H."/>
            <person name="Goodman H.M."/>
            <person name="Somerville C.R."/>
            <person name="Copenhaver G.P."/>
            <person name="Preuss D."/>
            <person name="Nierman W.C."/>
            <person name="White O."/>
            <person name="Eisen J.A."/>
            <person name="Salzberg S.L."/>
            <person name="Fraser C.M."/>
            <person name="Venter J.C."/>
        </authorList>
    </citation>
    <scope>NUCLEOTIDE SEQUENCE [LARGE SCALE GENOMIC DNA]</scope>
    <source>
        <strain>cv. Columbia</strain>
    </source>
</reference>
<reference key="2">
    <citation type="journal article" date="2017" name="Plant J.">
        <title>Araport11: a complete reannotation of the Arabidopsis thaliana reference genome.</title>
        <authorList>
            <person name="Cheng C.Y."/>
            <person name="Krishnakumar V."/>
            <person name="Chan A.P."/>
            <person name="Thibaud-Nissen F."/>
            <person name="Schobel S."/>
            <person name="Town C.D."/>
        </authorList>
    </citation>
    <scope>GENOME REANNOTATION</scope>
    <source>
        <strain>cv. Columbia</strain>
    </source>
</reference>
<reference key="3">
    <citation type="journal article" date="2010" name="BMC Genomics">
        <title>Genome-wide cloning and sequence analysis of leucine-rich repeat receptor-like protein kinase genes in Arabidopsis thaliana.</title>
        <authorList>
            <person name="Gou X."/>
            <person name="He K."/>
            <person name="Yang H."/>
            <person name="Yuan T."/>
            <person name="Lin H."/>
            <person name="Clouse S.D."/>
            <person name="Li J."/>
        </authorList>
    </citation>
    <scope>NUCLEOTIDE SEQUENCE [LARGE SCALE MRNA]</scope>
    <source>
        <strain>cv. Columbia</strain>
    </source>
</reference>
<feature type="signal peptide" evidence="2">
    <location>
        <begin position="1"/>
        <end position="24"/>
    </location>
</feature>
<feature type="chain" id="PRO_0000387550" description="Probable LRR receptor-like serine/threonine-protein kinase At2g28960">
    <location>
        <begin position="25"/>
        <end position="880"/>
    </location>
</feature>
<feature type="topological domain" description="Extracellular" evidence="2">
    <location>
        <begin position="25"/>
        <end position="511"/>
    </location>
</feature>
<feature type="transmembrane region" description="Helical" evidence="2">
    <location>
        <begin position="512"/>
        <end position="532"/>
    </location>
</feature>
<feature type="topological domain" description="Cytoplasmic" evidence="2">
    <location>
        <begin position="533"/>
        <end position="880"/>
    </location>
</feature>
<feature type="repeat" description="LRR 1">
    <location>
        <begin position="409"/>
        <end position="430"/>
    </location>
</feature>
<feature type="repeat" description="LRR 2">
    <location>
        <begin position="433"/>
        <end position="455"/>
    </location>
</feature>
<feature type="repeat" description="LRR 3">
    <location>
        <begin position="457"/>
        <end position="476"/>
    </location>
</feature>
<feature type="domain" description="Protein kinase" evidence="3">
    <location>
        <begin position="573"/>
        <end position="846"/>
    </location>
</feature>
<feature type="region of interest" description="Disordered" evidence="5">
    <location>
        <begin position="854"/>
        <end position="880"/>
    </location>
</feature>
<feature type="compositionally biased region" description="Polar residues" evidence="5">
    <location>
        <begin position="861"/>
        <end position="880"/>
    </location>
</feature>
<feature type="active site" description="Proton acceptor" evidence="3 4">
    <location>
        <position position="698"/>
    </location>
</feature>
<feature type="binding site" evidence="3">
    <location>
        <begin position="579"/>
        <end position="587"/>
    </location>
    <ligand>
        <name>ATP</name>
        <dbReference type="ChEBI" id="CHEBI:30616"/>
    </ligand>
</feature>
<feature type="binding site" evidence="3">
    <location>
        <position position="601"/>
    </location>
    <ligand>
        <name>ATP</name>
        <dbReference type="ChEBI" id="CHEBI:30616"/>
    </ligand>
</feature>
<feature type="modified residue" description="Phosphothreonine" evidence="1">
    <location>
        <position position="564"/>
    </location>
</feature>
<feature type="modified residue" description="Phosphotyrosine" evidence="1">
    <location>
        <position position="646"/>
    </location>
</feature>
<feature type="modified residue" description="Phosphoserine" evidence="1">
    <location>
        <position position="732"/>
    </location>
</feature>
<feature type="modified residue" description="Phosphothreonine" evidence="1">
    <location>
        <position position="733"/>
    </location>
</feature>
<feature type="modified residue" description="Phosphothreonine" evidence="1">
    <location>
        <position position="738"/>
    </location>
</feature>
<feature type="modified residue" description="Phosphotyrosine" evidence="1">
    <location>
        <position position="746"/>
    </location>
</feature>
<feature type="glycosylation site" description="N-linked (GlcNAc...) asparagine" evidence="2">
    <location>
        <position position="180"/>
    </location>
</feature>
<feature type="glycosylation site" description="N-linked (GlcNAc...) asparagine" evidence="2">
    <location>
        <position position="201"/>
    </location>
</feature>
<feature type="glycosylation site" description="N-linked (GlcNAc...) asparagine" evidence="2">
    <location>
        <position position="228"/>
    </location>
</feature>
<feature type="glycosylation site" description="N-linked (GlcNAc...) asparagine" evidence="2">
    <location>
        <position position="254"/>
    </location>
</feature>
<feature type="glycosylation site" description="N-linked (GlcNAc...) asparagine" evidence="2">
    <location>
        <position position="287"/>
    </location>
</feature>
<feature type="glycosylation site" description="N-linked (GlcNAc...) asparagine" evidence="2">
    <location>
        <position position="403"/>
    </location>
</feature>
<feature type="glycosylation site" description="N-linked (GlcNAc...) asparagine" evidence="2">
    <location>
        <position position="430"/>
    </location>
</feature>
<feature type="glycosylation site" description="N-linked (GlcNAc...) asparagine" evidence="2">
    <location>
        <position position="441"/>
    </location>
</feature>
<feature type="glycosylation site" description="N-linked (GlcNAc...) asparagine" evidence="2">
    <location>
        <position position="505"/>
    </location>
</feature>
<keyword id="KW-0067">ATP-binding</keyword>
<keyword id="KW-0325">Glycoprotein</keyword>
<keyword id="KW-0418">Kinase</keyword>
<keyword id="KW-0433">Leucine-rich repeat</keyword>
<keyword id="KW-0472">Membrane</keyword>
<keyword id="KW-0547">Nucleotide-binding</keyword>
<keyword id="KW-0597">Phosphoprotein</keyword>
<keyword id="KW-0675">Receptor</keyword>
<keyword id="KW-1185">Reference proteome</keyword>
<keyword id="KW-0677">Repeat</keyword>
<keyword id="KW-0723">Serine/threonine-protein kinase</keyword>
<keyword id="KW-0732">Signal</keyword>
<keyword id="KW-0808">Transferase</keyword>
<keyword id="KW-0812">Transmembrane</keyword>
<keyword id="KW-1133">Transmembrane helix</keyword>
<name>Y2289_ARATH</name>
<sequence>MEGRRQRLLVFIFGALAITHLVQAQPPDQRGFISLDCGLPVNESPYTDPRTGLTFSSDADFILSGLRGEAGDDNTYIYRQYKDLRYFPDGIRNCYNLKVEQGINYLIRAGFGYGNYDGLNVYPKFDLHVGPNMWIAVDLEFGKDREIIYMTTSNLLQICLVKTGSTIPMISTLELRPLRNDSYLTQFGPLDLIYRRAYSSNSTGFIRYPDDIFDRKWDRYNEFETDVNTTLNVRSSSPFQVPEAVSRMGITPENASLPLRFYVSLDDDSDKVNVYFHFAEIQALRGNETREFDIELEEDIIQSAYSPTMLQSDTKYNLSPHKCSSGLCYLKLVRTPRSTLPPLISAIEAFKVVDFPYAETNPNDVAAMKDIEAFYGLKMISWQGDPCVPELLKWEDLKCSYTNKSTPPRIISLDLSSRGLKGVIAPAFQNLTELRKLDLSNNSFTGGVPEFLASMKSLSIINLNWNDLTGPLPKLLLDREKNGLKLTIQGNPKLCNDASCKNNNNQTYIVPVVASVASVLIIIAVLILILVFKKRRPTQVDSLPTVQHGLPNRPSIFTQTKRFTYSEVEALTDNFERVLGEGGFGVVYHGILNGTQPIAVKLLSQSSVQGYKEFKAEVELLLRVHHVNLVSLVGYCDEESNLALLYEYAPNGDLKQHLSGERGGSPLKWSSRLKIVVETAQGLEYLHTGCKPPMVHRDVKTTNILLDEHFQAKLADFGLSRSFPVGGETHVSTAVAGTPGYLDPEYYRTNRLNEKSDVYSFGIVLLEIITSRPVIQQTREKPHIAAWVGYMLTKGDIENVVDPRLNRDYEPTSVWKALEIAMSCVNPSSEKRPTMSQVTNELKQCLTLENSKRGVREDMGSRSSVEMSTSFTTEINPKAR</sequence>
<organism>
    <name type="scientific">Arabidopsis thaliana</name>
    <name type="common">Mouse-ear cress</name>
    <dbReference type="NCBI Taxonomy" id="3702"/>
    <lineage>
        <taxon>Eukaryota</taxon>
        <taxon>Viridiplantae</taxon>
        <taxon>Streptophyta</taxon>
        <taxon>Embryophyta</taxon>
        <taxon>Tracheophyta</taxon>
        <taxon>Spermatophyta</taxon>
        <taxon>Magnoliopsida</taxon>
        <taxon>eudicotyledons</taxon>
        <taxon>Gunneridae</taxon>
        <taxon>Pentapetalae</taxon>
        <taxon>rosids</taxon>
        <taxon>malvids</taxon>
        <taxon>Brassicales</taxon>
        <taxon>Brassicaceae</taxon>
        <taxon>Camelineae</taxon>
        <taxon>Arabidopsis</taxon>
    </lineage>
</organism>
<dbReference type="EC" id="2.7.11.1"/>
<dbReference type="EMBL" id="AC005315">
    <property type="protein sequence ID" value="AAC33224.1"/>
    <property type="status" value="ALT_SEQ"/>
    <property type="molecule type" value="Genomic_DNA"/>
</dbReference>
<dbReference type="EMBL" id="CP002685">
    <property type="protein sequence ID" value="ANM62343.1"/>
    <property type="molecule type" value="Genomic_DNA"/>
</dbReference>
<dbReference type="EMBL" id="FJ708704">
    <property type="protein sequence ID" value="ACN59299.1"/>
    <property type="molecule type" value="mRNA"/>
</dbReference>
<dbReference type="PIR" id="T02728">
    <property type="entry name" value="T02728"/>
</dbReference>
<dbReference type="RefSeq" id="NP_180462.2">
    <property type="nucleotide sequence ID" value="NM_128455.3"/>
</dbReference>
<dbReference type="SMR" id="C0LGL4"/>
<dbReference type="BioGRID" id="2795">
    <property type="interactions" value="80"/>
</dbReference>
<dbReference type="FunCoup" id="C0LGL4">
    <property type="interactions" value="110"/>
</dbReference>
<dbReference type="IntAct" id="C0LGL4">
    <property type="interactions" value="80"/>
</dbReference>
<dbReference type="STRING" id="3702.C0LGL4"/>
<dbReference type="GlyGen" id="C0LGL4">
    <property type="glycosylation" value="10 sites"/>
</dbReference>
<dbReference type="PaxDb" id="3702-AT2G28960.1"/>
<dbReference type="ProteomicsDB" id="243101"/>
<dbReference type="EnsemblPlants" id="AT2G28960.2">
    <property type="protein sequence ID" value="AT2G28960.2"/>
    <property type="gene ID" value="AT2G28960"/>
</dbReference>
<dbReference type="GeneID" id="817445"/>
<dbReference type="Gramene" id="AT2G28960.2">
    <property type="protein sequence ID" value="AT2G28960.2"/>
    <property type="gene ID" value="AT2G28960"/>
</dbReference>
<dbReference type="KEGG" id="ath:AT2G28960"/>
<dbReference type="Araport" id="AT2G28960"/>
<dbReference type="TAIR" id="AT2G28960"/>
<dbReference type="eggNOG" id="ENOG502QQCZ">
    <property type="taxonomic scope" value="Eukaryota"/>
</dbReference>
<dbReference type="HOGENOM" id="CLU_000288_41_1_1"/>
<dbReference type="InParanoid" id="C0LGL4"/>
<dbReference type="PhylomeDB" id="C0LGL4"/>
<dbReference type="PRO" id="PR:C0LGL4"/>
<dbReference type="Proteomes" id="UP000006548">
    <property type="component" value="Chromosome 2"/>
</dbReference>
<dbReference type="ExpressionAtlas" id="C0LGL4">
    <property type="expression patterns" value="baseline and differential"/>
</dbReference>
<dbReference type="GO" id="GO:0016020">
    <property type="term" value="C:membrane"/>
    <property type="evidence" value="ECO:0007669"/>
    <property type="project" value="UniProtKB-SubCell"/>
</dbReference>
<dbReference type="GO" id="GO:0005524">
    <property type="term" value="F:ATP binding"/>
    <property type="evidence" value="ECO:0007669"/>
    <property type="project" value="UniProtKB-KW"/>
</dbReference>
<dbReference type="GO" id="GO:0106310">
    <property type="term" value="F:protein serine kinase activity"/>
    <property type="evidence" value="ECO:0007669"/>
    <property type="project" value="RHEA"/>
</dbReference>
<dbReference type="GO" id="GO:0004674">
    <property type="term" value="F:protein serine/threonine kinase activity"/>
    <property type="evidence" value="ECO:0007669"/>
    <property type="project" value="UniProtKB-KW"/>
</dbReference>
<dbReference type="CDD" id="cd14066">
    <property type="entry name" value="STKc_IRAK"/>
    <property type="match status" value="1"/>
</dbReference>
<dbReference type="FunFam" id="3.80.10.10:FF:000129">
    <property type="entry name" value="Leucine-rich repeat receptor-like kinase"/>
    <property type="match status" value="1"/>
</dbReference>
<dbReference type="FunFam" id="3.30.200.20:FF:000394">
    <property type="entry name" value="Leucine-rich repeat receptor-like protein kinase"/>
    <property type="match status" value="1"/>
</dbReference>
<dbReference type="FunFam" id="1.10.510.10:FF:000146">
    <property type="entry name" value="LRR receptor-like serine/threonine-protein kinase IOS1"/>
    <property type="match status" value="1"/>
</dbReference>
<dbReference type="Gene3D" id="3.30.200.20">
    <property type="entry name" value="Phosphorylase Kinase, domain 1"/>
    <property type="match status" value="1"/>
</dbReference>
<dbReference type="Gene3D" id="3.80.10.10">
    <property type="entry name" value="Ribonuclease Inhibitor"/>
    <property type="match status" value="1"/>
</dbReference>
<dbReference type="Gene3D" id="1.10.510.10">
    <property type="entry name" value="Transferase(Phosphotransferase) domain 1"/>
    <property type="match status" value="1"/>
</dbReference>
<dbReference type="InterPro" id="IPR011009">
    <property type="entry name" value="Kinase-like_dom_sf"/>
</dbReference>
<dbReference type="InterPro" id="IPR001611">
    <property type="entry name" value="Leu-rich_rpt"/>
</dbReference>
<dbReference type="InterPro" id="IPR032675">
    <property type="entry name" value="LRR_dom_sf"/>
</dbReference>
<dbReference type="InterPro" id="IPR024788">
    <property type="entry name" value="Malectin-like_Carb-bd_dom"/>
</dbReference>
<dbReference type="InterPro" id="IPR000719">
    <property type="entry name" value="Prot_kinase_dom"/>
</dbReference>
<dbReference type="InterPro" id="IPR017441">
    <property type="entry name" value="Protein_kinase_ATP_BS"/>
</dbReference>
<dbReference type="InterPro" id="IPR008271">
    <property type="entry name" value="Ser/Thr_kinase_AS"/>
</dbReference>
<dbReference type="PANTHER" id="PTHR45631:SF97">
    <property type="entry name" value="LEUCINE-RICH REPEAT PROTEIN KINASE FAMILY PROTEIN"/>
    <property type="match status" value="1"/>
</dbReference>
<dbReference type="PANTHER" id="PTHR45631">
    <property type="entry name" value="OS07G0107800 PROTEIN-RELATED"/>
    <property type="match status" value="1"/>
</dbReference>
<dbReference type="Pfam" id="PF13855">
    <property type="entry name" value="LRR_8"/>
    <property type="match status" value="1"/>
</dbReference>
<dbReference type="Pfam" id="PF12819">
    <property type="entry name" value="Malectin_like"/>
    <property type="match status" value="1"/>
</dbReference>
<dbReference type="Pfam" id="PF00069">
    <property type="entry name" value="Pkinase"/>
    <property type="match status" value="1"/>
</dbReference>
<dbReference type="SMART" id="SM00220">
    <property type="entry name" value="S_TKc"/>
    <property type="match status" value="1"/>
</dbReference>
<dbReference type="SUPFAM" id="SSF52058">
    <property type="entry name" value="L domain-like"/>
    <property type="match status" value="1"/>
</dbReference>
<dbReference type="SUPFAM" id="SSF56112">
    <property type="entry name" value="Protein kinase-like (PK-like)"/>
    <property type="match status" value="1"/>
</dbReference>
<dbReference type="PROSITE" id="PS00107">
    <property type="entry name" value="PROTEIN_KINASE_ATP"/>
    <property type="match status" value="1"/>
</dbReference>
<dbReference type="PROSITE" id="PS50011">
    <property type="entry name" value="PROTEIN_KINASE_DOM"/>
    <property type="match status" value="1"/>
</dbReference>
<dbReference type="PROSITE" id="PS00108">
    <property type="entry name" value="PROTEIN_KINASE_ST"/>
    <property type="match status" value="1"/>
</dbReference>